<organism>
    <name type="scientific">Rhodopirellula baltica (strain DSM 10527 / NCIMB 13988 / SH1)</name>
    <dbReference type="NCBI Taxonomy" id="243090"/>
    <lineage>
        <taxon>Bacteria</taxon>
        <taxon>Pseudomonadati</taxon>
        <taxon>Planctomycetota</taxon>
        <taxon>Planctomycetia</taxon>
        <taxon>Pirellulales</taxon>
        <taxon>Pirellulaceae</taxon>
        <taxon>Rhodopirellula</taxon>
    </lineage>
</organism>
<comment type="function">
    <text evidence="1">Catalyzes the cyclization of GTP to (8S)-3',8-cyclo-7,8-dihydroguanosine 5'-triphosphate.</text>
</comment>
<comment type="catalytic activity">
    <reaction evidence="1">
        <text>GTP + AH2 + S-adenosyl-L-methionine = (8S)-3',8-cyclo-7,8-dihydroguanosine 5'-triphosphate + 5'-deoxyadenosine + L-methionine + A + H(+)</text>
        <dbReference type="Rhea" id="RHEA:49576"/>
        <dbReference type="ChEBI" id="CHEBI:13193"/>
        <dbReference type="ChEBI" id="CHEBI:15378"/>
        <dbReference type="ChEBI" id="CHEBI:17319"/>
        <dbReference type="ChEBI" id="CHEBI:17499"/>
        <dbReference type="ChEBI" id="CHEBI:37565"/>
        <dbReference type="ChEBI" id="CHEBI:57844"/>
        <dbReference type="ChEBI" id="CHEBI:59789"/>
        <dbReference type="ChEBI" id="CHEBI:131766"/>
        <dbReference type="EC" id="4.1.99.22"/>
    </reaction>
</comment>
<comment type="cofactor">
    <cofactor evidence="1">
        <name>[4Fe-4S] cluster</name>
        <dbReference type="ChEBI" id="CHEBI:49883"/>
    </cofactor>
    <text evidence="1">Binds 2 [4Fe-4S] clusters. Binds 1 [4Fe-4S] cluster coordinated with 3 cysteines and an exchangeable S-adenosyl-L-methionine and 1 [4Fe-4S] cluster coordinated with 3 cysteines and the GTP-derived substrate.</text>
</comment>
<comment type="pathway">
    <text evidence="1">Cofactor biosynthesis; molybdopterin biosynthesis.</text>
</comment>
<comment type="subunit">
    <text evidence="1">Monomer and homodimer.</text>
</comment>
<comment type="similarity">
    <text evidence="1">Belongs to the radical SAM superfamily. MoaA family.</text>
</comment>
<proteinExistence type="inferred from homology"/>
<keyword id="KW-0004">4Fe-4S</keyword>
<keyword id="KW-0342">GTP-binding</keyword>
<keyword id="KW-0408">Iron</keyword>
<keyword id="KW-0411">Iron-sulfur</keyword>
<keyword id="KW-0456">Lyase</keyword>
<keyword id="KW-0479">Metal-binding</keyword>
<keyword id="KW-0501">Molybdenum cofactor biosynthesis</keyword>
<keyword id="KW-0547">Nucleotide-binding</keyword>
<keyword id="KW-1185">Reference proteome</keyword>
<keyword id="KW-0949">S-adenosyl-L-methionine</keyword>
<evidence type="ECO:0000255" key="1">
    <source>
        <dbReference type="HAMAP-Rule" id="MF_01225"/>
    </source>
</evidence>
<evidence type="ECO:0000255" key="2">
    <source>
        <dbReference type="PROSITE-ProRule" id="PRU01266"/>
    </source>
</evidence>
<dbReference type="EC" id="4.1.99.22" evidence="1"/>
<dbReference type="EMBL" id="BX294139">
    <property type="protein sequence ID" value="CAD73568.1"/>
    <property type="molecule type" value="Genomic_DNA"/>
</dbReference>
<dbReference type="RefSeq" id="NP_865883.1">
    <property type="nucleotide sequence ID" value="NC_005027.1"/>
</dbReference>
<dbReference type="RefSeq" id="WP_011119704.1">
    <property type="nucleotide sequence ID" value="NC_005027.1"/>
</dbReference>
<dbReference type="SMR" id="Q7UT69"/>
<dbReference type="FunCoup" id="Q7UT69">
    <property type="interactions" value="407"/>
</dbReference>
<dbReference type="STRING" id="243090.RB4069"/>
<dbReference type="EnsemblBacteria" id="CAD73568">
    <property type="protein sequence ID" value="CAD73568"/>
    <property type="gene ID" value="RB4069"/>
</dbReference>
<dbReference type="KEGG" id="rba:RB4069"/>
<dbReference type="PATRIC" id="fig|243090.15.peg.1895"/>
<dbReference type="eggNOG" id="COG2896">
    <property type="taxonomic scope" value="Bacteria"/>
</dbReference>
<dbReference type="HOGENOM" id="CLU_009273_0_1_0"/>
<dbReference type="InParanoid" id="Q7UT69"/>
<dbReference type="OrthoDB" id="9763993at2"/>
<dbReference type="UniPathway" id="UPA00344"/>
<dbReference type="Proteomes" id="UP000001025">
    <property type="component" value="Chromosome"/>
</dbReference>
<dbReference type="GO" id="GO:0051539">
    <property type="term" value="F:4 iron, 4 sulfur cluster binding"/>
    <property type="evidence" value="ECO:0007669"/>
    <property type="project" value="UniProtKB-UniRule"/>
</dbReference>
<dbReference type="GO" id="GO:0061799">
    <property type="term" value="F:cyclic pyranopterin monophosphate synthase activity"/>
    <property type="evidence" value="ECO:0000318"/>
    <property type="project" value="GO_Central"/>
</dbReference>
<dbReference type="GO" id="GO:0061798">
    <property type="term" value="F:GTP 3',8'-cyclase activity"/>
    <property type="evidence" value="ECO:0000318"/>
    <property type="project" value="GO_Central"/>
</dbReference>
<dbReference type="GO" id="GO:0005525">
    <property type="term" value="F:GTP binding"/>
    <property type="evidence" value="ECO:0007669"/>
    <property type="project" value="UniProtKB-UniRule"/>
</dbReference>
<dbReference type="GO" id="GO:0046872">
    <property type="term" value="F:metal ion binding"/>
    <property type="evidence" value="ECO:0007669"/>
    <property type="project" value="UniProtKB-KW"/>
</dbReference>
<dbReference type="GO" id="GO:1904047">
    <property type="term" value="F:S-adenosyl-L-methionine binding"/>
    <property type="evidence" value="ECO:0007669"/>
    <property type="project" value="UniProtKB-UniRule"/>
</dbReference>
<dbReference type="GO" id="GO:0006777">
    <property type="term" value="P:Mo-molybdopterin cofactor biosynthetic process"/>
    <property type="evidence" value="ECO:0000318"/>
    <property type="project" value="GO_Central"/>
</dbReference>
<dbReference type="CDD" id="cd01335">
    <property type="entry name" value="Radical_SAM"/>
    <property type="match status" value="1"/>
</dbReference>
<dbReference type="CDD" id="cd21117">
    <property type="entry name" value="Twitch_MoaA"/>
    <property type="match status" value="1"/>
</dbReference>
<dbReference type="Gene3D" id="3.20.20.70">
    <property type="entry name" value="Aldolase class I"/>
    <property type="match status" value="1"/>
</dbReference>
<dbReference type="HAMAP" id="MF_01225_B">
    <property type="entry name" value="MoaA_B"/>
    <property type="match status" value="1"/>
</dbReference>
<dbReference type="InterPro" id="IPR013785">
    <property type="entry name" value="Aldolase_TIM"/>
</dbReference>
<dbReference type="InterPro" id="IPR006638">
    <property type="entry name" value="Elp3/MiaA/NifB-like_rSAM"/>
</dbReference>
<dbReference type="InterPro" id="IPR013483">
    <property type="entry name" value="MoaA"/>
</dbReference>
<dbReference type="InterPro" id="IPR000385">
    <property type="entry name" value="MoaA_NifB_PqqE_Fe-S-bd_CS"/>
</dbReference>
<dbReference type="InterPro" id="IPR010505">
    <property type="entry name" value="MoaA_twitch"/>
</dbReference>
<dbReference type="InterPro" id="IPR050105">
    <property type="entry name" value="MoCo_biosynth_MoaA/MoaC"/>
</dbReference>
<dbReference type="InterPro" id="IPR007197">
    <property type="entry name" value="rSAM"/>
</dbReference>
<dbReference type="NCBIfam" id="TIGR02666">
    <property type="entry name" value="moaA"/>
    <property type="match status" value="1"/>
</dbReference>
<dbReference type="PANTHER" id="PTHR22960:SF0">
    <property type="entry name" value="MOLYBDENUM COFACTOR BIOSYNTHESIS PROTEIN 1"/>
    <property type="match status" value="1"/>
</dbReference>
<dbReference type="PANTHER" id="PTHR22960">
    <property type="entry name" value="MOLYBDOPTERIN COFACTOR SYNTHESIS PROTEIN A"/>
    <property type="match status" value="1"/>
</dbReference>
<dbReference type="Pfam" id="PF06463">
    <property type="entry name" value="Mob_synth_C"/>
    <property type="match status" value="1"/>
</dbReference>
<dbReference type="Pfam" id="PF04055">
    <property type="entry name" value="Radical_SAM"/>
    <property type="match status" value="1"/>
</dbReference>
<dbReference type="SFLD" id="SFLDG01383">
    <property type="entry name" value="cyclic_pyranopterin_phosphate"/>
    <property type="match status" value="1"/>
</dbReference>
<dbReference type="SFLD" id="SFLDG01386">
    <property type="entry name" value="main_SPASM_domain-containing"/>
    <property type="match status" value="1"/>
</dbReference>
<dbReference type="SMART" id="SM00729">
    <property type="entry name" value="Elp3"/>
    <property type="match status" value="1"/>
</dbReference>
<dbReference type="SUPFAM" id="SSF102114">
    <property type="entry name" value="Radical SAM enzymes"/>
    <property type="match status" value="1"/>
</dbReference>
<dbReference type="PROSITE" id="PS01305">
    <property type="entry name" value="MOAA_NIFB_PQQE"/>
    <property type="match status" value="1"/>
</dbReference>
<dbReference type="PROSITE" id="PS51918">
    <property type="entry name" value="RADICAL_SAM"/>
    <property type="match status" value="1"/>
</dbReference>
<accession>Q7UT69</accession>
<feature type="chain" id="PRO_0000227028" description="GTP 3',8-cyclase">
    <location>
        <begin position="1"/>
        <end position="359"/>
    </location>
</feature>
<feature type="domain" description="Radical SAM core" evidence="2">
    <location>
        <begin position="33"/>
        <end position="260"/>
    </location>
</feature>
<feature type="binding site" evidence="1">
    <location>
        <position position="42"/>
    </location>
    <ligand>
        <name>GTP</name>
        <dbReference type="ChEBI" id="CHEBI:37565"/>
    </ligand>
</feature>
<feature type="binding site" evidence="1">
    <location>
        <position position="49"/>
    </location>
    <ligand>
        <name>[4Fe-4S] cluster</name>
        <dbReference type="ChEBI" id="CHEBI:49883"/>
        <label>1</label>
        <note>4Fe-4S-S-AdoMet</note>
    </ligand>
</feature>
<feature type="binding site" evidence="1">
    <location>
        <position position="53"/>
    </location>
    <ligand>
        <name>[4Fe-4S] cluster</name>
        <dbReference type="ChEBI" id="CHEBI:49883"/>
        <label>1</label>
        <note>4Fe-4S-S-AdoMet</note>
    </ligand>
</feature>
<feature type="binding site" evidence="1">
    <location>
        <position position="55"/>
    </location>
    <ligand>
        <name>S-adenosyl-L-methionine</name>
        <dbReference type="ChEBI" id="CHEBI:59789"/>
    </ligand>
</feature>
<feature type="binding site" evidence="1">
    <location>
        <position position="56"/>
    </location>
    <ligand>
        <name>[4Fe-4S] cluster</name>
        <dbReference type="ChEBI" id="CHEBI:49883"/>
        <label>1</label>
        <note>4Fe-4S-S-AdoMet</note>
    </ligand>
</feature>
<feature type="binding site" evidence="1">
    <location>
        <position position="93"/>
    </location>
    <ligand>
        <name>GTP</name>
        <dbReference type="ChEBI" id="CHEBI:37565"/>
    </ligand>
</feature>
<feature type="binding site" evidence="1">
    <location>
        <position position="97"/>
    </location>
    <ligand>
        <name>S-adenosyl-L-methionine</name>
        <dbReference type="ChEBI" id="CHEBI:59789"/>
    </ligand>
</feature>
<feature type="binding site" evidence="1">
    <location>
        <position position="124"/>
    </location>
    <ligand>
        <name>GTP</name>
        <dbReference type="ChEBI" id="CHEBI:37565"/>
    </ligand>
</feature>
<feature type="binding site" evidence="1">
    <location>
        <position position="148"/>
    </location>
    <ligand>
        <name>S-adenosyl-L-methionine</name>
        <dbReference type="ChEBI" id="CHEBI:59789"/>
    </ligand>
</feature>
<feature type="binding site" evidence="1">
    <location>
        <position position="185"/>
    </location>
    <ligand>
        <name>GTP</name>
        <dbReference type="ChEBI" id="CHEBI:37565"/>
    </ligand>
</feature>
<feature type="binding site" evidence="1">
    <location>
        <position position="219"/>
    </location>
    <ligand>
        <name>S-adenosyl-L-methionine</name>
        <dbReference type="ChEBI" id="CHEBI:59789"/>
    </ligand>
</feature>
<feature type="binding site" evidence="1">
    <location>
        <position position="286"/>
    </location>
    <ligand>
        <name>[4Fe-4S] cluster</name>
        <dbReference type="ChEBI" id="CHEBI:49883"/>
        <label>2</label>
        <note>4Fe-4S-substrate</note>
    </ligand>
</feature>
<feature type="binding site" evidence="1">
    <location>
        <position position="289"/>
    </location>
    <ligand>
        <name>[4Fe-4S] cluster</name>
        <dbReference type="ChEBI" id="CHEBI:49883"/>
        <label>2</label>
        <note>4Fe-4S-substrate</note>
    </ligand>
</feature>
<feature type="binding site" evidence="1">
    <location>
        <begin position="291"/>
        <end position="293"/>
    </location>
    <ligand>
        <name>GTP</name>
        <dbReference type="ChEBI" id="CHEBI:37565"/>
    </ligand>
</feature>
<feature type="binding site" evidence="1">
    <location>
        <position position="303"/>
    </location>
    <ligand>
        <name>[4Fe-4S] cluster</name>
        <dbReference type="ChEBI" id="CHEBI:49883"/>
        <label>2</label>
        <note>4Fe-4S-substrate</note>
    </ligand>
</feature>
<reference key="1">
    <citation type="journal article" date="2003" name="Proc. Natl. Acad. Sci. U.S.A.">
        <title>Complete genome sequence of the marine planctomycete Pirellula sp. strain 1.</title>
        <authorList>
            <person name="Gloeckner F.O."/>
            <person name="Kube M."/>
            <person name="Bauer M."/>
            <person name="Teeling H."/>
            <person name="Lombardot T."/>
            <person name="Ludwig W."/>
            <person name="Gade D."/>
            <person name="Beck A."/>
            <person name="Borzym K."/>
            <person name="Heitmann K."/>
            <person name="Rabus R."/>
            <person name="Schlesner H."/>
            <person name="Amann R."/>
            <person name="Reinhardt R."/>
        </authorList>
    </citation>
    <scope>NUCLEOTIDE SEQUENCE [LARGE SCALE GENOMIC DNA]</scope>
    <source>
        <strain>DSM 10527 / NCIMB 13988 / SH1</strain>
    </source>
</reference>
<name>MOAA_RHOBA</name>
<sequence length="359" mass="39720">METLTASFFVRIASSIRAGYPTNMTDPIALVDRFGRRHDSLRISITDRCNIRCFYCMPEHDAEFLPRSGVLTFEEIERLAGLLVKRCGVRDIRITGGEPLVRRDCVDLIRMLARIDGLEDLSMTTNGMLLRDHAADLRSAGLKRLNVSLDTLDEATFVKIARRPGVDRVIDGIDAAIEAGFESIKLNALAIRGLSESELVGLVRFSIEKSVTLRFIEFMPLDSDRAWKSKDVLSGDACLKLLSEAFGDVTPTGRENPSAPAETFTLRCDGREGTIGIIRSVTRPFCGDCNRLRLTADGGLRNCLFSQSETPLRDAMRSGCDDDKLIQKIQQCVGEKHAAHGIDSDDFRPPERAMHAIGG</sequence>
<gene>
    <name evidence="1" type="primary">moaA</name>
    <name type="ordered locus">RB4069</name>
</gene>
<protein>
    <recommendedName>
        <fullName evidence="1">GTP 3',8-cyclase</fullName>
        <ecNumber evidence="1">4.1.99.22</ecNumber>
    </recommendedName>
    <alternativeName>
        <fullName evidence="1">Molybdenum cofactor biosynthesis protein A</fullName>
    </alternativeName>
</protein>